<protein>
    <recommendedName>
        <fullName>Nitrogenase molybdenum-iron protein beta chain</fullName>
        <ecNumber>1.18.6.1</ecNumber>
    </recommendedName>
    <alternativeName>
        <fullName>Dinitrogenase</fullName>
    </alternativeName>
    <alternativeName>
        <fullName>Nitrogenase component I</fullName>
    </alternativeName>
</protein>
<comment type="function">
    <text>This molybdenum-iron protein is part of the nitrogenase complex that catalyzes the key enzymatic reactions in nitrogen fixation.</text>
</comment>
<comment type="catalytic activity">
    <reaction>
        <text>N2 + 8 reduced [2Fe-2S]-[ferredoxin] + 16 ATP + 16 H2O = H2 + 8 oxidized [2Fe-2S]-[ferredoxin] + 2 NH4(+) + 16 ADP + 16 phosphate + 6 H(+)</text>
        <dbReference type="Rhea" id="RHEA:21448"/>
        <dbReference type="Rhea" id="RHEA-COMP:10000"/>
        <dbReference type="Rhea" id="RHEA-COMP:10001"/>
        <dbReference type="ChEBI" id="CHEBI:15377"/>
        <dbReference type="ChEBI" id="CHEBI:15378"/>
        <dbReference type="ChEBI" id="CHEBI:17997"/>
        <dbReference type="ChEBI" id="CHEBI:18276"/>
        <dbReference type="ChEBI" id="CHEBI:28938"/>
        <dbReference type="ChEBI" id="CHEBI:30616"/>
        <dbReference type="ChEBI" id="CHEBI:33737"/>
        <dbReference type="ChEBI" id="CHEBI:33738"/>
        <dbReference type="ChEBI" id="CHEBI:43474"/>
        <dbReference type="ChEBI" id="CHEBI:456216"/>
        <dbReference type="EC" id="1.18.6.1"/>
    </reaction>
</comment>
<comment type="cofactor">
    <cofactor evidence="1">
        <name>[8Fe-7S] cluster</name>
        <dbReference type="ChEBI" id="CHEBI:21143"/>
    </cofactor>
    <text evidence="1">Binds 1 [8Fe-7S] cluster per heterodimer.</text>
</comment>
<comment type="subunit">
    <text>Tetramer of two alpha and two beta chains. Forms complex with the iron protein (nitrogenase component 2).</text>
</comment>
<comment type="similarity">
    <text evidence="2">Belongs to the NifD/NifK/NifE/NifN family.</text>
</comment>
<proteinExistence type="inferred from homology"/>
<reference key="1">
    <citation type="journal article" date="1989" name="Mol. Microbiol.">
        <title>Primary structure, functional organization and expression of nitrogenase structural genes of the thermophilic archaebacterium Methanococcus thermolithotrophicus.</title>
        <authorList>
            <person name="Souillard N."/>
            <person name="Sibold L."/>
        </authorList>
    </citation>
    <scope>NUCLEOTIDE SEQUENCE [GENOMIC DNA]</scope>
</reference>
<gene>
    <name type="primary">nifK</name>
</gene>
<accession>P20622</accession>
<keyword id="KW-0067">ATP-binding</keyword>
<keyword id="KW-0408">Iron</keyword>
<keyword id="KW-0411">Iron-sulfur</keyword>
<keyword id="KW-0479">Metal-binding</keyword>
<keyword id="KW-0535">Nitrogen fixation</keyword>
<keyword id="KW-0547">Nucleotide-binding</keyword>
<keyword id="KW-0560">Oxidoreductase</keyword>
<organism>
    <name type="scientific">Methanothermococcus thermolithotrophicus</name>
    <name type="common">Methanococcus thermolithotrophicus</name>
    <dbReference type="NCBI Taxonomy" id="2186"/>
    <lineage>
        <taxon>Archaea</taxon>
        <taxon>Methanobacteriati</taxon>
        <taxon>Methanobacteriota</taxon>
        <taxon>Methanomada group</taxon>
        <taxon>Methanococci</taxon>
        <taxon>Methanococcales</taxon>
        <taxon>Methanococcaceae</taxon>
        <taxon>Methanothermococcus</taxon>
    </lineage>
</organism>
<evidence type="ECO:0000250" key="1"/>
<evidence type="ECO:0000305" key="2"/>
<dbReference type="EC" id="1.18.6.1"/>
<dbReference type="EMBL" id="X13830">
    <property type="protein sequence ID" value="CAA32059.1"/>
    <property type="molecule type" value="Genomic_DNA"/>
</dbReference>
<dbReference type="PIR" id="S06988">
    <property type="entry name" value="S06988"/>
</dbReference>
<dbReference type="SMR" id="P20622"/>
<dbReference type="GO" id="GO:0005524">
    <property type="term" value="F:ATP binding"/>
    <property type="evidence" value="ECO:0007669"/>
    <property type="project" value="UniProtKB-KW"/>
</dbReference>
<dbReference type="GO" id="GO:0051536">
    <property type="term" value="F:iron-sulfur cluster binding"/>
    <property type="evidence" value="ECO:0007669"/>
    <property type="project" value="UniProtKB-KW"/>
</dbReference>
<dbReference type="GO" id="GO:0046872">
    <property type="term" value="F:metal ion binding"/>
    <property type="evidence" value="ECO:0007669"/>
    <property type="project" value="UniProtKB-KW"/>
</dbReference>
<dbReference type="GO" id="GO:0016163">
    <property type="term" value="F:nitrogenase activity"/>
    <property type="evidence" value="ECO:0007669"/>
    <property type="project" value="UniProtKB-EC"/>
</dbReference>
<dbReference type="GO" id="GO:0009399">
    <property type="term" value="P:nitrogen fixation"/>
    <property type="evidence" value="ECO:0007669"/>
    <property type="project" value="UniProtKB-KW"/>
</dbReference>
<dbReference type="Gene3D" id="3.40.50.1980">
    <property type="entry name" value="Nitrogenase molybdenum iron protein domain"/>
    <property type="match status" value="1"/>
</dbReference>
<dbReference type="InterPro" id="IPR050152">
    <property type="entry name" value="ChlB/BchB/BchZ"/>
</dbReference>
<dbReference type="InterPro" id="IPR000510">
    <property type="entry name" value="Nase/OxRdtase_comp1"/>
</dbReference>
<dbReference type="PANTHER" id="PTHR33712">
    <property type="entry name" value="LIGHT-INDEPENDENT PROTOCHLOROPHYLLIDE REDUCTASE SUBUNIT B"/>
    <property type="match status" value="1"/>
</dbReference>
<dbReference type="PANTHER" id="PTHR33712:SF7">
    <property type="entry name" value="LIGHT-INDEPENDENT PROTOCHLOROPHYLLIDE REDUCTASE SUBUNIT B"/>
    <property type="match status" value="1"/>
</dbReference>
<dbReference type="Pfam" id="PF00148">
    <property type="entry name" value="Oxidored_nitro"/>
    <property type="match status" value="1"/>
</dbReference>
<dbReference type="SUPFAM" id="SSF53807">
    <property type="entry name" value="Helical backbone' metal receptor"/>
    <property type="match status" value="1"/>
</dbReference>
<sequence length="79" mass="8701">MSEVNAGEICYVKKQRKGTINPNKICQPIGAMWATVGVKGTIPFVQGSQGCTTYVRYAFNRHFREPVSIATASFHEHAA</sequence>
<name>NIFK_METTL</name>
<feature type="chain" id="PRO_0000153106" description="Nitrogenase molybdenum-iron protein beta chain">
    <location>
        <begin position="1"/>
        <end position="79" status="greater than"/>
    </location>
</feature>
<feature type="binding site" evidence="1">
    <location>
        <position position="26"/>
    </location>
    <ligand>
        <name>[8Fe-7S] cluster</name>
        <dbReference type="ChEBI" id="CHEBI:21143"/>
        <note>ligand shared with alpha chain</note>
    </ligand>
</feature>
<feature type="binding site" evidence="1">
    <location>
        <position position="51"/>
    </location>
    <ligand>
        <name>[8Fe-7S] cluster</name>
        <dbReference type="ChEBI" id="CHEBI:21143"/>
        <note>ligand shared with alpha chain</note>
    </ligand>
</feature>
<feature type="non-terminal residue">
    <location>
        <position position="79"/>
    </location>
</feature>